<proteinExistence type="evidence at protein level"/>
<accession>P02511</accession>
<accession>B0YIX0</accession>
<accession>O43416</accession>
<accession>Q9UC37</accession>
<accession>Q9UC38</accession>
<accession>Q9UC39</accession>
<accession>Q9UC40</accession>
<accession>Q9UC41</accession>
<organism>
    <name type="scientific">Homo sapiens</name>
    <name type="common">Human</name>
    <dbReference type="NCBI Taxonomy" id="9606"/>
    <lineage>
        <taxon>Eukaryota</taxon>
        <taxon>Metazoa</taxon>
        <taxon>Chordata</taxon>
        <taxon>Craniata</taxon>
        <taxon>Vertebrata</taxon>
        <taxon>Euteleostomi</taxon>
        <taxon>Mammalia</taxon>
        <taxon>Eutheria</taxon>
        <taxon>Euarchontoglires</taxon>
        <taxon>Primates</taxon>
        <taxon>Haplorrhini</taxon>
        <taxon>Catarrhini</taxon>
        <taxon>Hominidae</taxon>
        <taxon>Homo</taxon>
    </lineage>
</organism>
<name>CRYAB_HUMAN</name>
<keyword id="KW-0002">3D-structure</keyword>
<keyword id="KW-0007">Acetylation</keyword>
<keyword id="KW-0122">Cardiomyopathy</keyword>
<keyword id="KW-0898">Cataract</keyword>
<keyword id="KW-0143">Chaperone</keyword>
<keyword id="KW-0963">Cytoplasm</keyword>
<keyword id="KW-0903">Direct protein sequencing</keyword>
<keyword id="KW-0225">Disease variant</keyword>
<keyword id="KW-0273">Eye lens protein</keyword>
<keyword id="KW-0325">Glycoprotein</keyword>
<keyword id="KW-0458">Lysosome</keyword>
<keyword id="KW-0479">Metal-binding</keyword>
<keyword id="KW-1060">Myofibrillar myopathy</keyword>
<keyword id="KW-0539">Nucleus</keyword>
<keyword id="KW-0558">Oxidation</keyword>
<keyword id="KW-0597">Phosphoprotein</keyword>
<keyword id="KW-1267">Proteomics identification</keyword>
<keyword id="KW-1185">Reference proteome</keyword>
<keyword id="KW-0964">Secreted</keyword>
<keyword id="KW-0862">Zinc</keyword>
<comment type="function">
    <text evidence="2">May contribute to the transparency and refractive index of the lens. Has chaperone-like activity, preventing aggregation of various proteins under a wide range of stress conditions. In lens epithelial cells, stabilizes the ATP6V1A protein, preventing its degradation by the proteasome (By similarity).</text>
</comment>
<comment type="subunit">
    <text evidence="6 12 18 23 24 27 30 31">Heteromer composed of three CRYAA and one CRYAB subunits (PubMed:20836128). Aggregates with homologous proteins, including the small heat shock protein HSPB1, to form large heteromeric complexes (PubMed:10751411). Inter-subunit bridging via zinc ions enhances stability, which is crucial as there is no protein turn over in the lens (PubMed:22890888). Interacts with HSPBAP1 and TTN/titin (PubMed:14676215). Interacts with TMEM109; in the cellular response to DNA damage (PubMed:23542032). Interacts with DES; binds rapidly during early stages of DES filament assembly and a reduced binding seen in the later stages (PubMed:28470624). Interacts with TMED10; the interaction mediates the translocation from the cytoplasm into the ERGIC (endoplasmic reticulum-Golgi intermediate compartment) and thereby secretion (PubMed:32272059). Interacts with ATP6V1A and with MTOR, forming a ternary complex (PubMed:31786107).</text>
</comment>
<comment type="interaction">
    <interactant intactId="EBI-739060">
        <id>P02511</id>
    </interactant>
    <interactant intactId="EBI-10173507">
        <id>Q6UY14-3</id>
        <label>ADAMTSL4</label>
    </interactant>
    <organismsDiffer>false</organismsDiffer>
    <experiments>3</experiments>
</comment>
<comment type="interaction">
    <interactant intactId="EBI-739060">
        <id>P02511</id>
    </interactant>
    <interactant intactId="EBI-2556852">
        <id>P09525</id>
        <label>ANXA4</label>
    </interactant>
    <organismsDiffer>false</organismsDiffer>
    <experiments>3</experiments>
</comment>
<comment type="interaction">
    <interactant intactId="EBI-739060">
        <id>P02511</id>
    </interactant>
    <interactant intactId="EBI-77613">
        <id>P05067</id>
        <label>APP</label>
    </interactant>
    <organismsDiffer>false</organismsDiffer>
    <experiments>7</experiments>
</comment>
<comment type="interaction">
    <interactant intactId="EBI-739060">
        <id>P02511</id>
    </interactant>
    <interactant intactId="EBI-10699285">
        <id>Q6QEF8-4</id>
        <label>CORO6</label>
    </interactant>
    <organismsDiffer>false</organismsDiffer>
    <experiments>3</experiments>
</comment>
<comment type="interaction">
    <interactant intactId="EBI-739060">
        <id>P02511</id>
    </interactant>
    <interactant intactId="EBI-473101">
        <id>Q14194</id>
        <label>CRMP1</label>
    </interactant>
    <organismsDiffer>false</organismsDiffer>
    <experiments>3</experiments>
</comment>
<comment type="interaction">
    <interactant intactId="EBI-739060">
        <id>P02511</id>
    </interactant>
    <interactant intactId="EBI-6875961">
        <id>P02489</id>
        <label>CRYAA</label>
    </interactant>
    <organismsDiffer>false</organismsDiffer>
    <experiments>18</experiments>
</comment>
<comment type="interaction">
    <interactant intactId="EBI-739060">
        <id>P02511</id>
    </interactant>
    <interactant intactId="EBI-739060">
        <id>P02511</id>
        <label>CRYAB</label>
    </interactant>
    <organismsDiffer>false</organismsDiffer>
    <experiments>30</experiments>
</comment>
<comment type="interaction">
    <interactant intactId="EBI-739060">
        <id>P02511</id>
    </interactant>
    <interactant intactId="EBI-7043337">
        <id>P05813</id>
        <label>CRYBA1</label>
    </interactant>
    <organismsDiffer>false</organismsDiffer>
    <experiments>2</experiments>
</comment>
<comment type="interaction">
    <interactant intactId="EBI-739060">
        <id>P02511</id>
    </interactant>
    <interactant intactId="EBI-6875941">
        <id>P07315</id>
        <label>CRYGC</label>
    </interactant>
    <organismsDiffer>false</organismsDiffer>
    <experiments>3</experiments>
</comment>
<comment type="interaction">
    <interactant intactId="EBI-739060">
        <id>P02511</id>
    </interactant>
    <interactant intactId="EBI-11308647">
        <id>P22914</id>
        <label>CRYGS</label>
    </interactant>
    <organismsDiffer>false</organismsDiffer>
    <experiments>2</experiments>
</comment>
<comment type="interaction">
    <interactant intactId="EBI-739060">
        <id>P02511</id>
    </interactant>
    <interactant intactId="EBI-491549">
        <id>P35222</id>
        <label>CTNNB1</label>
    </interactant>
    <organismsDiffer>false</organismsDiffer>
    <experiments>6</experiments>
</comment>
<comment type="interaction">
    <interactant intactId="EBI-739060">
        <id>P02511</id>
    </interactant>
    <interactant intactId="EBI-949824">
        <id>O00471</id>
        <label>EXOC5</label>
    </interactant>
    <organismsDiffer>false</organismsDiffer>
    <experiments>3</experiments>
</comment>
<comment type="interaction">
    <interactant intactId="EBI-739060">
        <id>P02511</id>
    </interactant>
    <interactant intactId="EBI-739467">
        <id>Q9H8Y8</id>
        <label>GORASP2</label>
    </interactant>
    <organismsDiffer>false</organismsDiffer>
    <experiments>3</experiments>
</comment>
<comment type="interaction">
    <interactant intactId="EBI-739060">
        <id>P02511</id>
    </interactant>
    <interactant intactId="EBI-25830912">
        <id>Q96LI6-3</id>
        <label>HSFY2</label>
    </interactant>
    <organismsDiffer>false</organismsDiffer>
    <experiments>3</experiments>
</comment>
<comment type="interaction">
    <interactant intactId="EBI-739060">
        <id>P02511</id>
    </interactant>
    <interactant intactId="EBI-352682">
        <id>P04792</id>
        <label>HSPB1</label>
    </interactant>
    <organismsDiffer>false</organismsDiffer>
    <experiments>7</experiments>
</comment>
<comment type="interaction">
    <interactant intactId="EBI-739060">
        <id>P02511</id>
    </interactant>
    <interactant intactId="EBI-739395">
        <id>Q16082</id>
        <label>HSPB2</label>
    </interactant>
    <organismsDiffer>false</organismsDiffer>
    <experiments>3</experiments>
</comment>
<comment type="interaction">
    <interactant intactId="EBI-739060">
        <id>P02511</id>
    </interactant>
    <interactant intactId="EBI-12111050">
        <id>Q3LI64</id>
        <label>KRTAP6-1</label>
    </interactant>
    <organismsDiffer>false</organismsDiffer>
    <experiments>3</experiments>
</comment>
<comment type="interaction">
    <interactant intactId="EBI-739060">
        <id>P02511</id>
    </interactant>
    <interactant intactId="EBI-749195">
        <id>P60891</id>
        <label>PRPS1</label>
    </interactant>
    <organismsDiffer>false</organismsDiffer>
    <experiments>3</experiments>
</comment>
<comment type="interaction">
    <interactant intactId="EBI-739060">
        <id>P02511</id>
    </interactant>
    <interactant intactId="EBI-743880">
        <id>Q8WUY3</id>
        <label>PRUNE2</label>
    </interactant>
    <organismsDiffer>false</organismsDiffer>
    <experiments>3</experiments>
</comment>
<comment type="interaction">
    <interactant intactId="EBI-739060">
        <id>P02511</id>
    </interactant>
    <interactant intactId="EBI-2366300">
        <id>Q3UBX0</id>
        <label>Tmem109</label>
    </interactant>
    <organismsDiffer>true</organismsDiffer>
    <experiments>2</experiments>
</comment>
<comment type="subcellular location">
    <subcellularLocation>
        <location evidence="17 28">Cytoplasm</location>
    </subcellularLocation>
    <subcellularLocation>
        <location evidence="17">Nucleus</location>
    </subcellularLocation>
    <subcellularLocation>
        <location evidence="31">Secreted</location>
    </subcellularLocation>
    <subcellularLocation>
        <location evidence="2">Lysosome</location>
    </subcellularLocation>
    <text evidence="17 28 31">Translocates to the nucleus during heat shock and resides in sub-nuclear structures known as SC35 speckles or nuclear splicing speckles (PubMed:19464326). Localizes at the Z-bands and the intercalated disk in cardiomyocytes (PubMed:28493373). Can be secreted; the secretion is dependent on protein unfolding and facilitated by the cargo receptor TMED10; it results in protein translocation from the cytoplasm into the ERGIC (endoplasmic reticulum-Golgi intermediate compartment) followed by vesicle entry and secretion (PubMed:32272059).</text>
</comment>
<comment type="tissue specificity">
    <text evidence="25 28 34">Lens as well as other tissues (PubMed:2387586, PubMed:838078). Expressed in myocardial tissue (PubMed:28493373).</text>
</comment>
<comment type="mass spectrometry" mass="20201.0" method="Electrospray" evidence="7 33"/>
<comment type="mass spectrometry" mass="20281.0" method="Electrospray" evidence="7 33">
    <text>With 1 phosphate group.</text>
</comment>
<comment type="mass spectrometry" mass="20360.0" method="Electrospray" evidence="33">
    <text>With 2 phosphate groups.</text>
</comment>
<comment type="mass spectrometry" mass="20199.0" method="Electrospray" evidence="7 33"/>
<comment type="mass spectrometry" mass="20278.0" method="Electrospray" evidence="7 33">
    <text>With 1 phosphate group.</text>
</comment>
<comment type="disease" evidence="11 13 21 26 35">
    <disease id="DI-01179">
        <name>Myopathy, myofibrillar, 2</name>
        <acronym>MFM2</acronym>
        <description>A form of myofibrillar myopathy, a group of chronic neuromuscular disorders characterized at ultrastructural level by disintegration of the sarcomeric Z disk and myofibrils, and replacement of the normal myofibrillar markings by small dense granules, or larger hyaline masses, or amorphous material. MFM2 is characterized by weakness of the proximal and distal limb muscles, weakness of the neck, velopharynx and trunk muscles, hypertrophic cardiomyopathy, and cataract in a subset of patients.</description>
        <dbReference type="MIM" id="608810"/>
    </disease>
    <text>The disease is caused by variants affecting the gene represented in this entry.</text>
</comment>
<comment type="disease" evidence="10 16 20">
    <disease id="DI-02998">
        <name>Cataract 16, multiple types</name>
        <acronym>CTRCT16</acronym>
        <description>An opacification of the crystalline lens of the eye that frequently results in visual impairment or blindness. Opacities vary in morphology, are often confined to a portion of the lens, and may be static or progressive. In general, the more posteriorly located and dense an opacity, the greater the impact on visual function. CTRCT16 includes posterior polar cataract, among others. Posterior polar cataract is a subcapsular opacity, usually disk-shaped, located at the back of the lens.</description>
        <dbReference type="MIM" id="613763"/>
    </disease>
    <text>The disease is caused by variants affecting the gene represented in this entry.</text>
</comment>
<comment type="disease">
    <text evidence="28">CRYAB mutations may be involved in restrictive cardiomyopathy (RCM), a rare non-ischemic myocardial disease. RCM is characterized by restrictive ventricular-filling physiology in the presence of normal or reduced diastolic and/or systolic volumes (of 1 or both ventricles), biatrial enlargement, and normal ventricular wall thickness.</text>
</comment>
<comment type="disease" evidence="19">
    <disease id="DI-03083">
        <name>Myopathy, myofibrillar, fatal infantile hypertonic, alpha-B crystallin-related</name>
        <acronym>MFMFIH-CRYAB</acronym>
        <description>A form of myofibrillar myopathy, a group of chronic neuromuscular disorders characterized at ultrastructural level by disintegration of the sarcomeric Z disk and myofibrils, and replacement of the normal myofibrillar markings by small dense granules, or larger hyaline masses, or amorphous material. MFMFIH-CRYAB has onset in the first weeks of life after a normal neonatal period. Affected infants show rapidly progressive muscular rigidity of the trunk and limbs associated with increasing respiratory difficulty resulting in death before age 3 years.</description>
        <dbReference type="MIM" id="613869"/>
    </disease>
    <text>The disease is caused by variants affecting the gene represented in this entry.</text>
</comment>
<comment type="disease" evidence="14 15">
    <disease id="DI-03750">
        <name>Cardiomyopathy, dilated, 1II</name>
        <acronym>CMD1II</acronym>
        <description>A disorder characterized by ventricular dilation and impaired systolic function, resulting in congestive heart failure and arrhythmia. Patients are at risk of premature death.</description>
        <dbReference type="MIM" id="615184"/>
    </disease>
    <text>The disease is caused by variants affecting the gene represented in this entry.</text>
</comment>
<comment type="similarity">
    <text evidence="4">Belongs to the small heat shock protein (HSP20) family.</text>
</comment>
<comment type="online information" name="Atlas of Genetics and Cytogenetics in Oncology and Haematology">
    <link uri="https://atlasgeneticsoncology.org/gene/40156/CRYAB"/>
</comment>
<protein>
    <recommendedName>
        <fullName>Alpha-crystallin B chain</fullName>
    </recommendedName>
    <alternativeName>
        <fullName>Alpha(B)-crystallin</fullName>
    </alternativeName>
    <alternativeName>
        <fullName>Heat shock protein beta-5</fullName>
        <shortName>HspB5</shortName>
    </alternativeName>
    <alternativeName>
        <fullName>Heat shock protein family B member 5</fullName>
    </alternativeName>
    <alternativeName>
        <fullName>Renal carcinoma antigen NY-REN-27</fullName>
    </alternativeName>
    <alternativeName>
        <fullName>Rosenthal fiber component</fullName>
    </alternativeName>
</protein>
<reference key="1">
    <citation type="journal article" date="1977" name="FEBS Lett.">
        <title>The primary structure of the B2 chain of human alpha-crystallin.</title>
        <authorList>
            <person name="Kramps J.A."/>
            <person name="de Man B.M."/>
            <person name="de Jong W.W."/>
        </authorList>
    </citation>
    <scope>PRELIMINARY PROTEIN SEQUENCE</scope>
    <scope>TISSUE SPECIFICITY</scope>
    <scope>ACETYLATION AT MET-1</scope>
</reference>
<reference key="2">
    <citation type="journal article" date="1990" name="Genomics">
        <title>Human alpha B-crystallin gene and preferential promoter function in lens.</title>
        <authorList>
            <person name="Dubin R.A."/>
            <person name="Ally A.H."/>
            <person name="Chung S."/>
            <person name="Piatigorsky J."/>
        </authorList>
    </citation>
    <scope>NUCLEOTIDE SEQUENCE [GENOMIC DNA]</scope>
    <scope>TISSUE SPECIFICITY</scope>
</reference>
<reference key="3">
    <citation type="journal article" date="1992" name="Neurosci. Lett.">
        <title>Accumulation of alpha B-crystallin in brains of patients with Alexander's disease is not due to an abnormality of the 5'-flanking and coding sequence of the genomic DNA.</title>
        <authorList>
            <person name="Iwaki A."/>
            <person name="Iwaki T."/>
            <person name="Goldman J.E."/>
            <person name="Ogomori K."/>
            <person name="Tateishi J."/>
            <person name="Sakaki Y."/>
        </authorList>
    </citation>
    <scope>NUCLEOTIDE SEQUENCE [MRNA]</scope>
</reference>
<reference key="4">
    <citation type="submission" date="1997-06" db="EMBL/GenBank/DDBJ databases">
        <authorList>
            <person name="Yu W."/>
            <person name="Sarginson J."/>
            <person name="Gibbs R.A."/>
        </authorList>
    </citation>
    <scope>NUCLEOTIDE SEQUENCE [LARGE SCALE MRNA]</scope>
</reference>
<reference key="5">
    <citation type="journal article" date="2004" name="Nat. Genet.">
        <title>Complete sequencing and characterization of 21,243 full-length human cDNAs.</title>
        <authorList>
            <person name="Ota T."/>
            <person name="Suzuki Y."/>
            <person name="Nishikawa T."/>
            <person name="Otsuki T."/>
            <person name="Sugiyama T."/>
            <person name="Irie R."/>
            <person name="Wakamatsu A."/>
            <person name="Hayashi K."/>
            <person name="Sato H."/>
            <person name="Nagai K."/>
            <person name="Kimura K."/>
            <person name="Makita H."/>
            <person name="Sekine M."/>
            <person name="Obayashi M."/>
            <person name="Nishi T."/>
            <person name="Shibahara T."/>
            <person name="Tanaka T."/>
            <person name="Ishii S."/>
            <person name="Yamamoto J."/>
            <person name="Saito K."/>
            <person name="Kawai Y."/>
            <person name="Isono Y."/>
            <person name="Nakamura Y."/>
            <person name="Nagahari K."/>
            <person name="Murakami K."/>
            <person name="Yasuda T."/>
            <person name="Iwayanagi T."/>
            <person name="Wagatsuma M."/>
            <person name="Shiratori A."/>
            <person name="Sudo H."/>
            <person name="Hosoiri T."/>
            <person name="Kaku Y."/>
            <person name="Kodaira H."/>
            <person name="Kondo H."/>
            <person name="Sugawara M."/>
            <person name="Takahashi M."/>
            <person name="Kanda K."/>
            <person name="Yokoi T."/>
            <person name="Furuya T."/>
            <person name="Kikkawa E."/>
            <person name="Omura Y."/>
            <person name="Abe K."/>
            <person name="Kamihara K."/>
            <person name="Katsuta N."/>
            <person name="Sato K."/>
            <person name="Tanikawa M."/>
            <person name="Yamazaki M."/>
            <person name="Ninomiya K."/>
            <person name="Ishibashi T."/>
            <person name="Yamashita H."/>
            <person name="Murakawa K."/>
            <person name="Fujimori K."/>
            <person name="Tanai H."/>
            <person name="Kimata M."/>
            <person name="Watanabe M."/>
            <person name="Hiraoka S."/>
            <person name="Chiba Y."/>
            <person name="Ishida S."/>
            <person name="Ono Y."/>
            <person name="Takiguchi S."/>
            <person name="Watanabe S."/>
            <person name="Yosida M."/>
            <person name="Hotuta T."/>
            <person name="Kusano J."/>
            <person name="Kanehori K."/>
            <person name="Takahashi-Fujii A."/>
            <person name="Hara H."/>
            <person name="Tanase T.-O."/>
            <person name="Nomura Y."/>
            <person name="Togiya S."/>
            <person name="Komai F."/>
            <person name="Hara R."/>
            <person name="Takeuchi K."/>
            <person name="Arita M."/>
            <person name="Imose N."/>
            <person name="Musashino K."/>
            <person name="Yuuki H."/>
            <person name="Oshima A."/>
            <person name="Sasaki N."/>
            <person name="Aotsuka S."/>
            <person name="Yoshikawa Y."/>
            <person name="Matsunawa H."/>
            <person name="Ichihara T."/>
            <person name="Shiohata N."/>
            <person name="Sano S."/>
            <person name="Moriya S."/>
            <person name="Momiyama H."/>
            <person name="Satoh N."/>
            <person name="Takami S."/>
            <person name="Terashima Y."/>
            <person name="Suzuki O."/>
            <person name="Nakagawa S."/>
            <person name="Senoh A."/>
            <person name="Mizoguchi H."/>
            <person name="Goto Y."/>
            <person name="Shimizu F."/>
            <person name="Wakebe H."/>
            <person name="Hishigaki H."/>
            <person name="Watanabe T."/>
            <person name="Sugiyama A."/>
            <person name="Takemoto M."/>
            <person name="Kawakami B."/>
            <person name="Yamazaki M."/>
            <person name="Watanabe K."/>
            <person name="Kumagai A."/>
            <person name="Itakura S."/>
            <person name="Fukuzumi Y."/>
            <person name="Fujimori Y."/>
            <person name="Komiyama M."/>
            <person name="Tashiro H."/>
            <person name="Tanigami A."/>
            <person name="Fujiwara T."/>
            <person name="Ono T."/>
            <person name="Yamada K."/>
            <person name="Fujii Y."/>
            <person name="Ozaki K."/>
            <person name="Hirao M."/>
            <person name="Ohmori Y."/>
            <person name="Kawabata A."/>
            <person name="Hikiji T."/>
            <person name="Kobatake N."/>
            <person name="Inagaki H."/>
            <person name="Ikema Y."/>
            <person name="Okamoto S."/>
            <person name="Okitani R."/>
            <person name="Kawakami T."/>
            <person name="Noguchi S."/>
            <person name="Itoh T."/>
            <person name="Shigeta K."/>
            <person name="Senba T."/>
            <person name="Matsumura K."/>
            <person name="Nakajima Y."/>
            <person name="Mizuno T."/>
            <person name="Morinaga M."/>
            <person name="Sasaki M."/>
            <person name="Togashi T."/>
            <person name="Oyama M."/>
            <person name="Hata H."/>
            <person name="Watanabe M."/>
            <person name="Komatsu T."/>
            <person name="Mizushima-Sugano J."/>
            <person name="Satoh T."/>
            <person name="Shirai Y."/>
            <person name="Takahashi Y."/>
            <person name="Nakagawa K."/>
            <person name="Okumura K."/>
            <person name="Nagase T."/>
            <person name="Nomura N."/>
            <person name="Kikuchi H."/>
            <person name="Masuho Y."/>
            <person name="Yamashita R."/>
            <person name="Nakai K."/>
            <person name="Yada T."/>
            <person name="Nakamura Y."/>
            <person name="Ohara O."/>
            <person name="Isogai T."/>
            <person name="Sugano S."/>
        </authorList>
    </citation>
    <scope>NUCLEOTIDE SEQUENCE [LARGE SCALE MRNA]</scope>
</reference>
<reference key="6">
    <citation type="submission" date="2003-05" db="EMBL/GenBank/DDBJ databases">
        <title>Cloning of human full-length CDSs in BD Creator(TM) system donor vector.</title>
        <authorList>
            <person name="Kalnine N."/>
            <person name="Chen X."/>
            <person name="Rolfs A."/>
            <person name="Halleck A."/>
            <person name="Hines L."/>
            <person name="Eisenstein S."/>
            <person name="Koundinya M."/>
            <person name="Raphael J."/>
            <person name="Moreira D."/>
            <person name="Kelley T."/>
            <person name="LaBaer J."/>
            <person name="Lin Y."/>
            <person name="Phelan M."/>
            <person name="Farmer A."/>
        </authorList>
    </citation>
    <scope>NUCLEOTIDE SEQUENCE [LARGE SCALE MRNA]</scope>
</reference>
<reference key="7">
    <citation type="submission" date="2007-02" db="EMBL/GenBank/DDBJ databases">
        <authorList>
            <consortium name="NHLBI resequencing and genotyping service (RS&amp;G)"/>
        </authorList>
    </citation>
    <scope>NUCLEOTIDE SEQUENCE [GENOMIC DNA]</scope>
</reference>
<reference key="8">
    <citation type="submission" date="2005-07" db="EMBL/GenBank/DDBJ databases">
        <authorList>
            <person name="Mural R.J."/>
            <person name="Istrail S."/>
            <person name="Sutton G.G."/>
            <person name="Florea L."/>
            <person name="Halpern A.L."/>
            <person name="Mobarry C.M."/>
            <person name="Lippert R."/>
            <person name="Walenz B."/>
            <person name="Shatkay H."/>
            <person name="Dew I."/>
            <person name="Miller J.R."/>
            <person name="Flanigan M.J."/>
            <person name="Edwards N.J."/>
            <person name="Bolanos R."/>
            <person name="Fasulo D."/>
            <person name="Halldorsson B.V."/>
            <person name="Hannenhalli S."/>
            <person name="Turner R."/>
            <person name="Yooseph S."/>
            <person name="Lu F."/>
            <person name="Nusskern D.R."/>
            <person name="Shue B.C."/>
            <person name="Zheng X.H."/>
            <person name="Zhong F."/>
            <person name="Delcher A.L."/>
            <person name="Huson D.H."/>
            <person name="Kravitz S.A."/>
            <person name="Mouchard L."/>
            <person name="Reinert K."/>
            <person name="Remington K.A."/>
            <person name="Clark A.G."/>
            <person name="Waterman M.S."/>
            <person name="Eichler E.E."/>
            <person name="Adams M.D."/>
            <person name="Hunkapiller M.W."/>
            <person name="Myers E.W."/>
            <person name="Venter J.C."/>
        </authorList>
    </citation>
    <scope>NUCLEOTIDE SEQUENCE [LARGE SCALE GENOMIC DNA]</scope>
</reference>
<reference key="9">
    <citation type="journal article" date="2004" name="Genome Res.">
        <title>The status, quality, and expansion of the NIH full-length cDNA project: the Mammalian Gene Collection (MGC).</title>
        <authorList>
            <consortium name="The MGC Project Team"/>
        </authorList>
    </citation>
    <scope>NUCLEOTIDE SEQUENCE [LARGE SCALE MRNA]</scope>
    <source>
        <tissue>Heart</tissue>
    </source>
</reference>
<reference key="10">
    <citation type="journal article" date="1992" name="J. Biol. Chem.">
        <title>Copurification of small heat shock protein with alpha B crystallin from human skeletal muscle.</title>
        <authorList>
            <person name="Kato K."/>
            <person name="Shinohara H."/>
            <person name="Goto S."/>
            <person name="Inaguma Y."/>
            <person name="Morishita R."/>
            <person name="Asano T."/>
        </authorList>
    </citation>
    <scope>PROTEIN SEQUENCE OF 2-24; 35-66 AND 118-175</scope>
    <scope>ASSOCIATION WITH HSPB1</scope>
    <source>
        <tissue>Pectoralis muscle</tissue>
    </source>
</reference>
<reference key="11">
    <citation type="journal article" date="1997" name="J. Biol. Chem.">
        <title>Sequence analysis of betaA3, betaB3, and betaA4 crystallins completes the identification of the major proteins in young human lens.</title>
        <authorList>
            <person name="Lampi K.J."/>
            <person name="Ma Z."/>
            <person name="Shih M."/>
            <person name="Shearer T.R."/>
            <person name="Smith J.B."/>
            <person name="Smith D.L."/>
            <person name="David L.L."/>
        </authorList>
    </citation>
    <scope>PROTEIN SEQUENCE OF 57-66</scope>
</reference>
<reference key="12">
    <citation type="journal article" date="1995" name="Electrophoresis">
        <title>The major protein expression profile and two-dimensional protein database of human heart.</title>
        <authorList>
            <person name="Kovalyov L.I."/>
            <person name="Shishkin S.S."/>
            <person name="Efimochkin A.S."/>
            <person name="Kovalyova M.A."/>
            <person name="Ershova E.S."/>
            <person name="Egorov T.A."/>
            <person name="Musalyamov A.K."/>
        </authorList>
    </citation>
    <scope>PROTEIN SEQUENCE OF 83-89 AND 164-172</scope>
    <source>
        <tissue>Heart</tissue>
    </source>
</reference>
<reference key="13">
    <citation type="journal article" date="1989" name="Cell">
        <title>Alpha B-crystallin is expressed in non-lenticular tissues and accumulates in Alexander's disease brain.</title>
        <authorList>
            <person name="Iwaki T."/>
            <person name="Kume-Iwaki A."/>
            <person name="Liem R.K.H."/>
            <person name="Goldman J.E."/>
        </authorList>
    </citation>
    <scope>NUCLEOTIDE SEQUENCE [MRNA] OF 107-175</scope>
</reference>
<reference key="14">
    <citation type="journal article" date="1994" name="Biochim. Biophys. Acta">
        <title>Simultaneous racemization and isomerization at specific aspartic acid residues in alpha B-crystallin from the aged human lens.</title>
        <authorList>
            <person name="Fujii N."/>
            <person name="Ishibashi Y."/>
            <person name="Satoh K."/>
            <person name="Fujino M."/>
            <person name="Harada K."/>
        </authorList>
    </citation>
    <scope>RACEMIZATION/ISOMERIZATION OF SPECIFIC ASP</scope>
    <scope>ACETYLATION AT MET-1</scope>
</reference>
<reference key="15">
    <citation type="journal article" date="1994" name="J. Biol. Chem.">
        <title>Post-translational modifications of water-soluble human lens crystallins from young adults.</title>
        <authorList>
            <person name="Miesbauer L.R."/>
            <person name="Zhou X."/>
            <person name="Yang Z."/>
            <person name="Yang Z."/>
            <person name="Sun Y."/>
            <person name="Smith D.L."/>
            <person name="Smith J.B."/>
        </authorList>
    </citation>
    <scope>PHOSPHORYLATION AT SER-19; SER-45 AND SER-59</scope>
    <scope>MASS SPECTROMETRY</scope>
</reference>
<reference key="16">
    <citation type="journal article" date="1999" name="Int. J. Cancer">
        <title>Antigens recognized by autologous antibody in patients with renal-cell carcinoma.</title>
        <authorList>
            <person name="Scanlan M.J."/>
            <person name="Gordan J.D."/>
            <person name="Williamson B."/>
            <person name="Stockert E."/>
            <person name="Bander N.H."/>
            <person name="Jongeneel C.V."/>
            <person name="Gure A.O."/>
            <person name="Jaeger D."/>
            <person name="Jaeger E."/>
            <person name="Knuth A."/>
            <person name="Chen Y.-T."/>
            <person name="Old L.J."/>
        </authorList>
    </citation>
    <scope>IDENTIFICATION AS A RENAL CANCER ANTIGEN</scope>
    <source>
        <tissue>Renal cell carcinoma</tissue>
    </source>
</reference>
<reference key="17">
    <citation type="journal article" date="2000" name="Exp. Eye Res.">
        <title>The major in vivo modifications of the human water-insoluble lens crystallins are disulfide bonds, deamidation, methionine oxidation and backbone cleavage.</title>
        <authorList>
            <person name="Hanson S.R.A."/>
            <person name="Hasan A."/>
            <person name="Smith D.L."/>
            <person name="Smith J.B."/>
        </authorList>
    </citation>
    <scope>MASS SPECTROMETRY</scope>
    <scope>SUSCEPTIBILITY TO OXIDATION</scope>
    <scope>PHOSPHORYLATION</scope>
</reference>
<reference key="18">
    <citation type="journal article" date="2000" name="J. Biol. Chem.">
        <title>Identification and characterization of a novel protein from Sertoli cells, PASS1, that associates with mammalian small stress protein hsp27.</title>
        <authorList>
            <person name="Liu C."/>
            <person name="Gilmont R.R."/>
            <person name="Benndorf R."/>
            <person name="Welsh M.J."/>
        </authorList>
    </citation>
    <scope>INTERACTION WITH HSPBAP1</scope>
</reference>
<reference key="19">
    <citation type="journal article" date="2001" name="Am. J. Hum. Genet.">
        <title>Alpha-B crystallin gene (CRYAB) mutation causes dominant congenital posterior polar cataract in humans.</title>
        <authorList>
            <person name="Berry V."/>
            <person name="Francis P."/>
            <person name="Reddy M.A."/>
            <person name="Collyer D."/>
            <person name="Vithana E."/>
            <person name="MacKay I."/>
            <person name="Dawson G."/>
            <person name="Carey A.H."/>
            <person name="Moore A."/>
            <person name="Bhattacharya S.S."/>
            <person name="Quinlan R.A."/>
        </authorList>
    </citation>
    <scope>INVOLVEMENT IN CTRCT16</scope>
</reference>
<reference key="20">
    <citation type="journal article" date="2001" name="J. Neurochem.">
        <title>Ser-59 is the major phosphorylation site in alphaB-crystallin accumulated in the brains of patients with Alexander's disease.</title>
        <authorList>
            <person name="Kato K."/>
            <person name="Inaguma Y."/>
            <person name="Ito H."/>
            <person name="Iida K."/>
            <person name="Iwamoto I."/>
            <person name="Kamei K."/>
            <person name="Ochi N."/>
            <person name="Ohta H."/>
            <person name="Kishikawa M."/>
        </authorList>
    </citation>
    <scope>PHOSPHORYLATION AT SER-45 AND SER-59</scope>
</reference>
<reference key="21">
    <citation type="journal article" date="2001" name="Protein Sci.">
        <title>In vivo carbamylation and acetylation of water-soluble human lens alphaB-crystallin lysine 92.</title>
        <authorList>
            <person name="Lapko V.N."/>
            <person name="Smith D.L."/>
            <person name="Smith J.B."/>
        </authorList>
    </citation>
    <scope>ACETYLATION AT LYS-92</scope>
</reference>
<reference key="22">
    <citation type="journal article" date="2003" name="Ann. Neurol.">
        <title>Myofibrillar myopathy caused by novel dominant negative alpha B-crystallin mutations.</title>
        <authorList>
            <person name="Selcen D."/>
            <person name="Engel A.G."/>
        </authorList>
    </citation>
    <scope>INVOLVEMENT IN MFM2</scope>
</reference>
<reference key="23">
    <citation type="journal article" date="2004" name="J. Biol. Chem.">
        <title>Association of the chaperone alphaB-crystallin with titin in heart muscle.</title>
        <authorList>
            <person name="Bullard B."/>
            <person name="Ferguson C."/>
            <person name="Minajeva A."/>
            <person name="Leake M.C."/>
            <person name="Gautel M."/>
            <person name="Labeit D."/>
            <person name="Ding L."/>
            <person name="Labeit S."/>
            <person name="Horwitz J."/>
            <person name="Leonard K.R."/>
            <person name="Linke W.A."/>
        </authorList>
    </citation>
    <scope>INTERACTION WITH TTN</scope>
</reference>
<reference key="24">
    <citation type="journal article" date="2009" name="Biochim. Biophys. Acta">
        <title>HSPB7 is a SC35 speckle resident small heat shock protein.</title>
        <authorList>
            <person name="Vos M.J."/>
            <person name="Kanon B."/>
            <person name="Kampinga H.H."/>
        </authorList>
    </citation>
    <scope>SUBCELLULAR LOCATION</scope>
</reference>
<reference key="25">
    <citation type="journal article" date="2010" name="IUBMB Life">
        <title>Importance of eye lens alpha-crystallin heteropolymer with 3:1 alphaA to alphaB ratio: stability, aggregation, and modifications.</title>
        <authorList>
            <person name="Srinivas P."/>
            <person name="Narahari A."/>
            <person name="Petrash J.M."/>
            <person name="Swamy M.J."/>
            <person name="Reddy G.B."/>
        </authorList>
    </citation>
    <scope>SUBUNIT</scope>
</reference>
<reference key="26">
    <citation type="journal article" date="2011" name="Ann. Neurol.">
        <title>Infantile muscular dystrophy in Canadian aboriginals is an alphaB-crystallinopathy.</title>
        <authorList>
            <person name="Del Bigio M.R."/>
            <person name="Chudley A.E."/>
            <person name="Sarnat H.B."/>
            <person name="Campbell C."/>
            <person name="Goobie S."/>
            <person name="Chodirker B.N."/>
            <person name="Selcen D."/>
        </authorList>
    </citation>
    <scope>INVOLVEMENT IN MFMFIH-CRYAB</scope>
</reference>
<reference key="27">
    <citation type="journal article" date="2012" name="Biochim. Biophys. Acta">
        <title>Acetylation of alphaA-crystallin in the human lens: effects on structure and chaperone function.</title>
        <authorList>
            <person name="Nagaraj R.H."/>
            <person name="Nahomi R.B."/>
            <person name="Shanthakumar S."/>
            <person name="Linetsky M."/>
            <person name="Padmanabha S."/>
            <person name="Pasupuleti N."/>
            <person name="Wang B."/>
            <person name="Santhoshkumar P."/>
            <person name="Panda A.K."/>
            <person name="Biswas A."/>
        </authorList>
    </citation>
    <scope>ACETYLATION AT LYS-92 AND LYS-166</scope>
</reference>
<reference key="28">
    <citation type="journal article" date="2012" name="Protein J.">
        <title>Identification of histidine residues involved in Zn(2+) binding to alphaA- and alphaB-Crystallin by chemical modification and MALDI TOF mass spectrometry.</title>
        <authorList>
            <person name="Karmakar S."/>
            <person name="Das K.P."/>
        </authorList>
    </citation>
    <scope>SUBUNIT</scope>
    <scope>ZINC-BINDING SITES</scope>
</reference>
<reference key="29">
    <citation type="journal article" date="2013" name="FEBS Lett.">
        <title>Protective role of the endoplasmic reticulum protein mitsugumin23 against ultraviolet C-induced cell death.</title>
        <authorList>
            <person name="Yamashita A."/>
            <person name="Taniwaki T."/>
            <person name="Kaikoi Y."/>
            <person name="Yamazaki T."/>
        </authorList>
    </citation>
    <scope>INTERACTION WITH TMEM109</scope>
</reference>
<reference key="30">
    <citation type="journal article" date="2014" name="J. Proteomics">
        <title>An enzyme assisted RP-RPLC approach for in-depth analysis of human liver phosphoproteome.</title>
        <authorList>
            <person name="Bian Y."/>
            <person name="Song C."/>
            <person name="Cheng K."/>
            <person name="Dong M."/>
            <person name="Wang F."/>
            <person name="Huang J."/>
            <person name="Sun D."/>
            <person name="Wang L."/>
            <person name="Ye M."/>
            <person name="Zou H."/>
        </authorList>
    </citation>
    <scope>PHOSPHORYLATION [LARGE SCALE ANALYSIS] AT SER-59</scope>
    <scope>IDENTIFICATION BY MASS SPECTROMETRY [LARGE SCALE ANALYSIS]</scope>
    <source>
        <tissue>Liver</tissue>
    </source>
</reference>
<reference key="31">
    <citation type="journal article" date="2017" name="Cell Stress Chaperones">
        <title>alphaB-crystallin is a sensor for assembly intermediates and for the subunit topology of desmin intermediate filaments.</title>
        <authorList>
            <person name="Sharma S."/>
            <person name="Conover G.M."/>
            <person name="Elliott J.L."/>
            <person name="Der Perng M."/>
            <person name="Herrmann H."/>
            <person name="Quinlan R.A."/>
        </authorList>
    </citation>
    <scope>INTERACTION WITH DES</scope>
</reference>
<reference key="32">
    <citation type="journal article" date="2017" name="Hum. Mutat.">
        <title>The novel alphaB-crystallin (CRYAB) mutation p.D109G causes restrictive cardiomyopathy.</title>
        <authorList>
            <person name="Brodehl A."/>
            <person name="Gaertner-Rommel A."/>
            <person name="Klauke B."/>
            <person name="Grewe S.A."/>
            <person name="Schirmer I."/>
            <person name="Peterschroeder A."/>
            <person name="Faber L."/>
            <person name="Vorgerd M."/>
            <person name="Gummert J."/>
            <person name="Anselmetti D."/>
            <person name="Schulz U."/>
            <person name="Paluszkiewicz L."/>
            <person name="Milting H."/>
        </authorList>
    </citation>
    <scope>SUBCELLULAR LOCATION</scope>
    <scope>TISSUE SPECIFICITY</scope>
    <scope>INVOLVEMENT IN RESTRICTIVE CARDIOMYOPATHY</scope>
    <scope>VARIANT GLY-109</scope>
    <scope>CHARACTERIZATION OF VARIANT GLY-109 AND GLY-120</scope>
</reference>
<reference key="33">
    <citation type="journal article" date="2020" name="Biochim. Biophys. Acta">
        <title>Heat shock factor 4 regulates lysosome activity by modulating the alphaB-crystallin-ATP6V1A-mTOR complex in ocular lens.</title>
        <authorList>
            <person name="Cui X."/>
            <person name="Feng R."/>
            <person name="Wang J."/>
            <person name="Du C."/>
            <person name="Pi X."/>
            <person name="Chen D."/>
            <person name="Li J."/>
            <person name="Li H."/>
            <person name="Zhang J."/>
            <person name="Zhang J."/>
            <person name="Mu H."/>
            <person name="Zhang F."/>
            <person name="Liu M."/>
            <person name="Hu Y."/>
        </authorList>
    </citation>
    <scope>FUNCTION</scope>
    <scope>INTERACTION WITH ATP6V1A AND MTOR</scope>
</reference>
<reference key="34">
    <citation type="journal article" date="2020" name="Cell">
        <title>A Translocation Pathway for Vesicle-Mediated Unconventional Protein Secretion.</title>
        <authorList>
            <person name="Zhang M."/>
            <person name="Liu L."/>
            <person name="Lin X."/>
            <person name="Wang Y."/>
            <person name="Li Y."/>
            <person name="Guo Q."/>
            <person name="Li S."/>
            <person name="Sun Y."/>
            <person name="Tao X."/>
            <person name="Zhang D."/>
            <person name="Lv X."/>
            <person name="Zheng L."/>
            <person name="Ge L."/>
        </authorList>
    </citation>
    <scope>SUBCELLULAR LOCATION</scope>
    <scope>INTERACTION WITH TMED10</scope>
</reference>
<reference key="35">
    <citation type="journal article" date="2009" name="J. Mol. Biol.">
        <title>Crystal structures of alpha-crystallin domain dimers of alphaB-crystallin and Hsp20.</title>
        <authorList>
            <person name="Bagneris C."/>
            <person name="Bateman O.A."/>
            <person name="Naylor C.E."/>
            <person name="Cronin N."/>
            <person name="Boelens W.C."/>
            <person name="Keep N.H."/>
            <person name="Slingsby C."/>
        </authorList>
    </citation>
    <scope>X-RAY CRYSTALLOGRAPHY (2.63 ANGSTROMS) OF 67-157</scope>
    <scope>HOMODIMERIZATION</scope>
</reference>
<reference evidence="39" key="36">
    <citation type="journal article" date="2017" name="Nat. Commun.">
        <title>Structural insights into the substrate binding adaptability and specificity of human O-GlcNAcase.</title>
        <authorList>
            <person name="Li B."/>
            <person name="Li H."/>
            <person name="Hu C.W."/>
            <person name="Jiang J."/>
        </authorList>
    </citation>
    <scope>X-RAY CRYSTALLOGRAPHY (2.80 ANGSTROMS) OF 38-50 IN COMPLEX WITH OGA</scope>
    <scope>GLYCOSYLATION AT SER-41</scope>
    <scope>DEGLYCOSYLATION AT SER-4</scope>
</reference>
<reference key="37">
    <citation type="journal article" date="1998" name="Nat. Genet.">
        <title>A missense mutation in the alphaB-crystallin chaperone gene causes a desmin-related myopathy.</title>
        <authorList>
            <person name="Vicart P."/>
            <person name="Caron A."/>
            <person name="Guicheney P."/>
            <person name="Li Z."/>
            <person name="Prevost M.-C."/>
            <person name="Faure A."/>
            <person name="Chateau D."/>
            <person name="Chapon F."/>
            <person name="Tome F."/>
            <person name="Dupret J.-M."/>
            <person name="Paulin D."/>
            <person name="Fardeau M."/>
        </authorList>
    </citation>
    <scope>VARIANT MFM2 GLY-120</scope>
    <scope>INVOLVEMENT IN MFM2</scope>
</reference>
<reference key="38">
    <citation type="journal article" date="2003" name="Invest. Ophthalmol. Vis. Sci.">
        <title>Alteration of protein-protein interactions of congenital cataract crystallin mutants.</title>
        <authorList>
            <person name="Fu L."/>
            <person name="Liang J.J.-N."/>
        </authorList>
    </citation>
    <scope>CHARACTERIZATION OF VARIANTS MFM2 GLY-120</scope>
</reference>
<reference key="39">
    <citation type="journal article" date="2006" name="Biochem. Biophys. Res. Commun.">
        <title>Alpha B-crystallin mutation in dilated cardiomyopathy.</title>
        <authorList>
            <person name="Inagaki N."/>
            <person name="Hayashi T."/>
            <person name="Arimura T."/>
            <person name="Koga Y."/>
            <person name="Takahashi M."/>
            <person name="Shibata H."/>
            <person name="Teraoka K."/>
            <person name="Chikamori T."/>
            <person name="Yamashina A."/>
            <person name="Kimura A."/>
        </authorList>
    </citation>
    <scope>VARIANT CMD1II HIS-157</scope>
    <scope>INVOLVEMENT IN CMD1II</scope>
</reference>
<reference key="40">
    <citation type="journal article" date="2006" name="Biochem. Biophys. Res. Commun.">
        <title>alphaB-crystallin mutation in dilated cardiomyopathies: low prevalence in a consecutive series of 200 unrelated probands.</title>
        <authorList>
            <person name="Pilotto A."/>
            <person name="Marziliano N."/>
            <person name="Pasotti M."/>
            <person name="Grasso M."/>
            <person name="Costante A.M."/>
            <person name="Arbustini E."/>
        </authorList>
    </citation>
    <scope>VARIANT CMD1II SER-154</scope>
    <scope>INVOLVEMENT IN CMD1II</scope>
</reference>
<reference key="41">
    <citation type="journal article" date="2008" name="Mol. Vis.">
        <title>Crystallin gene mutations in Indian families with inherited pediatric cataract.</title>
        <authorList>
            <person name="Devi R.R."/>
            <person name="Yao W."/>
            <person name="Vijayalakshmi P."/>
            <person name="Sergeev Y.V."/>
            <person name="Sundaresan P."/>
            <person name="Hejtmancik J.F."/>
        </authorList>
    </citation>
    <scope>VARIANT CTRCT16 THR-171</scope>
    <scope>INVOLVEMENT IN CTRCT16</scope>
</reference>
<reference key="42">
    <citation type="journal article" date="2011" name="Mol. Vis.">
        <title>Mutation analysis of 12 genes in Chinese families with congenital cataracts.</title>
        <authorList>
            <person name="Sun W."/>
            <person name="Xiao X."/>
            <person name="Li S."/>
            <person name="Guo X."/>
            <person name="Zhang Q."/>
        </authorList>
    </citation>
    <scope>VARIANT CTRCT16 CYS-69</scope>
    <scope>INVOLVEMENT IN CTRCT16</scope>
</reference>
<reference key="43">
    <citation type="journal article" date="2012" name="Neuromuscul. Disord.">
        <title>A novel CRYAB mutation resulting in multisystemic disease.</title>
        <authorList>
            <person name="Sacconi S."/>
            <person name="Feasson L."/>
            <person name="Antoine J.C."/>
            <person name="Pecheux C."/>
            <person name="Bernard R."/>
            <person name="Cobo A.M."/>
            <person name="Casarin A."/>
            <person name="Salviati L."/>
            <person name="Desnuelle C."/>
            <person name="Urtizberea A."/>
        </authorList>
    </citation>
    <scope>VARIANT MFM2 HIS-109</scope>
    <scope>INVOLVEMENT IN MFM2</scope>
</reference>
<reference key="44">
    <citation type="journal article" date="2014" name="Orphanet J. Rare Dis.">
        <title>Unusual multisystemic involvement and a novel BAG3 mutation revealed by NGS screening in a large cohort of myofibrillar myopathies.</title>
        <authorList>
            <person name="Semmler A.L."/>
            <person name="Sacconi S."/>
            <person name="Bach J.E."/>
            <person name="Liebe C."/>
            <person name="Buermann J."/>
            <person name="Kley R.A."/>
            <person name="Ferbert A."/>
            <person name="Anderheiden R."/>
            <person name="Van den Bergh P."/>
            <person name="Martin J.J."/>
            <person name="De Jonghe P."/>
            <person name="Neuen-Jacob E."/>
            <person name="Mueller O."/>
            <person name="Deschauer M."/>
            <person name="Bergmann M."/>
            <person name="Schroeder J.M."/>
            <person name="Vorgerd M."/>
            <person name="Schulz J.B."/>
            <person name="Weis J."/>
            <person name="Kress W."/>
            <person name="Claeys K.G."/>
        </authorList>
    </citation>
    <scope>VARIANT MFM2 SER-154</scope>
    <scope>INVOLVEMENT IN MFM2</scope>
</reference>
<feature type="chain" id="PRO_0000125907" description="Alpha-crystallin B chain">
    <location>
        <begin position="1"/>
        <end position="175"/>
    </location>
</feature>
<feature type="domain" description="sHSP" evidence="4">
    <location>
        <begin position="56"/>
        <end position="164"/>
    </location>
</feature>
<feature type="region of interest" description="Disordered" evidence="5">
    <location>
        <begin position="146"/>
        <end position="175"/>
    </location>
</feature>
<feature type="binding site" evidence="1">
    <location>
        <position position="83"/>
    </location>
    <ligand>
        <name>Zn(2+)</name>
        <dbReference type="ChEBI" id="CHEBI:29105"/>
        <label>1</label>
    </ligand>
</feature>
<feature type="binding site" evidence="37">
    <location>
        <position position="104"/>
    </location>
    <ligand>
        <name>Zn(2+)</name>
        <dbReference type="ChEBI" id="CHEBI:29105"/>
        <label>2</label>
    </ligand>
</feature>
<feature type="binding site" evidence="1">
    <location>
        <position position="106"/>
    </location>
    <ligand>
        <name>Zn(2+)</name>
        <dbReference type="ChEBI" id="CHEBI:29105"/>
        <label>2</label>
    </ligand>
</feature>
<feature type="binding site" evidence="37">
    <location>
        <position position="111"/>
    </location>
    <ligand>
        <name>Zn(2+)</name>
        <dbReference type="ChEBI" id="CHEBI:29105"/>
        <label>1</label>
    </ligand>
</feature>
<feature type="binding site" evidence="37">
    <location>
        <position position="119"/>
    </location>
    <ligand>
        <name>Zn(2+)</name>
        <dbReference type="ChEBI" id="CHEBI:29105"/>
        <label>1</label>
    </ligand>
</feature>
<feature type="site" description="Susceptible to oxidation">
    <location>
        <position position="48"/>
    </location>
</feature>
<feature type="site" description="Susceptible to oxidation">
    <location>
        <position position="60"/>
    </location>
</feature>
<feature type="site" description="Susceptible to oxidation">
    <location>
        <position position="68"/>
    </location>
</feature>
<feature type="modified residue" description="N-acetylmethionine" evidence="32 34">
    <location>
        <position position="1"/>
    </location>
</feature>
<feature type="modified residue" description="Phosphoserine" evidence="33">
    <location>
        <position position="19"/>
    </location>
</feature>
<feature type="modified residue" description="Phosphoserine" evidence="8 33">
    <location>
        <position position="45"/>
    </location>
</feature>
<feature type="modified residue" description="Phosphoserine" evidence="8 33 40">
    <location>
        <position position="59"/>
    </location>
</feature>
<feature type="modified residue" description="N6-acetyllysine; partial" evidence="9 22">
    <location>
        <position position="92"/>
    </location>
</feature>
<feature type="modified residue" description="N6-acetyllysine" evidence="22">
    <location>
        <position position="166"/>
    </location>
</feature>
<feature type="glycosylation site" description="O-linked (GlcNAc) serine" evidence="29">
    <location>
        <position position="41"/>
    </location>
</feature>
<feature type="glycosylation site" description="O-linked (GlcNAc) threonine" evidence="3">
    <location>
        <position position="170"/>
    </location>
</feature>
<feature type="sequence variant" id="VAR_014607" description="In dbSNP:rs2234703.">
    <original>S</original>
    <variation>Y</variation>
    <location>
        <position position="41"/>
    </location>
</feature>
<feature type="sequence variant" id="VAR_014608" description="In dbSNP:rs2234704.">
    <original>P</original>
    <variation>L</variation>
    <location>
        <position position="51"/>
    </location>
</feature>
<feature type="sequence variant" id="VAR_084806" description="In CTRCT16; uncertain significance; dbSNP:rs139750142." evidence="20">
    <original>R</original>
    <variation>C</variation>
    <location>
        <position position="69"/>
    </location>
</feature>
<feature type="sequence variant" id="VAR_079841" description="Found in patients with restrictive cardiomyopathy; likely pathogenic; reduces CRYAB and DES localization at the Z-bands and the intercalated disk in the myocardium; cytoplasmic aggregations of CRYAB and DES; dbSNP:rs1114167341." evidence="28">
    <original>D</original>
    <variation>G</variation>
    <location>
        <position position="109"/>
    </location>
</feature>
<feature type="sequence variant" id="VAR_069528" description="In MFM2; dbSNP:rs387907339." evidence="21">
    <original>D</original>
    <variation>H</variation>
    <location>
        <position position="109"/>
    </location>
</feature>
<feature type="sequence variant" id="VAR_007899" description="In MFM2; decreased interactions with wild-type CRYAA and CRYAB but increased interactions with wild-type CRYBB2 and CRYGC; cytoplasmic aggregation; dbSNP:rs104894201." evidence="11 28 35">
    <original>R</original>
    <variation>G</variation>
    <location>
        <position position="120"/>
    </location>
</feature>
<feature type="sequence variant" id="VAR_070035" description="In CMD1II and MFM2; uncertain significance; dbSNP:rs150516929." evidence="15 26">
    <original>G</original>
    <variation>S</variation>
    <location>
        <position position="154"/>
    </location>
</feature>
<feature type="sequence variant" id="VAR_070036" description="In CMD1II; dbSNP:rs141638421." evidence="14">
    <original>R</original>
    <variation>H</variation>
    <location>
        <position position="157"/>
    </location>
</feature>
<feature type="sequence variant" id="VAR_084807" description="In CTRCT16; uncertain significance; dbSNP:rs370803064." evidence="16">
    <original>A</original>
    <variation>T</variation>
    <location>
        <position position="171"/>
    </location>
</feature>
<feature type="sequence conflict" description="In Ref. 4; AAC19161." evidence="36" ref="4">
    <original>E</original>
    <variation>K</variation>
    <location>
        <position position="165"/>
    </location>
</feature>
<feature type="sequence conflict" description="In Ref. 4; AAC19161." evidence="36" ref="4">
    <original>K</original>
    <variation>KKMPFLELHFLKQESFPTSE</variation>
    <location>
        <position position="175"/>
    </location>
</feature>
<feature type="strand" evidence="43">
    <location>
        <begin position="68"/>
        <end position="70"/>
    </location>
</feature>
<feature type="strand" evidence="43">
    <location>
        <begin position="72"/>
        <end position="80"/>
    </location>
</feature>
<feature type="strand" evidence="42">
    <location>
        <begin position="82"/>
        <end position="84"/>
    </location>
</feature>
<feature type="helix" evidence="43">
    <location>
        <begin position="86"/>
        <end position="88"/>
    </location>
</feature>
<feature type="strand" evidence="43">
    <location>
        <begin position="89"/>
        <end position="94"/>
    </location>
</feature>
<feature type="strand" evidence="43">
    <location>
        <begin position="97"/>
        <end position="109"/>
    </location>
</feature>
<feature type="strand" evidence="43">
    <location>
        <begin position="112"/>
        <end position="123"/>
    </location>
</feature>
<feature type="turn" evidence="41">
    <location>
        <begin position="125"/>
        <end position="127"/>
    </location>
</feature>
<feature type="helix" evidence="43">
    <location>
        <begin position="130"/>
        <end position="132"/>
    </location>
</feature>
<feature type="strand" evidence="43">
    <location>
        <begin position="134"/>
        <end position="137"/>
    </location>
</feature>
<feature type="strand" evidence="43">
    <location>
        <begin position="141"/>
        <end position="148"/>
    </location>
</feature>
<feature type="strand" evidence="44">
    <location>
        <begin position="157"/>
        <end position="159"/>
    </location>
</feature>
<feature type="strand" evidence="44">
    <location>
        <begin position="161"/>
        <end position="163"/>
    </location>
</feature>
<gene>
    <name evidence="38" type="primary">CRYAB</name>
    <name type="synonym">CRYA2</name>
    <name type="synonym">HSPB5</name>
</gene>
<evidence type="ECO:0000250" key="1"/>
<evidence type="ECO:0000250" key="2">
    <source>
        <dbReference type="UniProtKB" id="P23927"/>
    </source>
</evidence>
<evidence type="ECO:0000250" key="3">
    <source>
        <dbReference type="UniProtKB" id="P23928"/>
    </source>
</evidence>
<evidence type="ECO:0000255" key="4">
    <source>
        <dbReference type="PROSITE-ProRule" id="PRU00285"/>
    </source>
</evidence>
<evidence type="ECO:0000256" key="5">
    <source>
        <dbReference type="SAM" id="MobiDB-lite"/>
    </source>
</evidence>
<evidence type="ECO:0000269" key="6">
    <source>
    </source>
</evidence>
<evidence type="ECO:0000269" key="7">
    <source>
    </source>
</evidence>
<evidence type="ECO:0000269" key="8">
    <source>
    </source>
</evidence>
<evidence type="ECO:0000269" key="9">
    <source>
    </source>
</evidence>
<evidence type="ECO:0000269" key="10">
    <source>
    </source>
</evidence>
<evidence type="ECO:0000269" key="11">
    <source>
    </source>
</evidence>
<evidence type="ECO:0000269" key="12">
    <source>
    </source>
</evidence>
<evidence type="ECO:0000269" key="13">
    <source>
    </source>
</evidence>
<evidence type="ECO:0000269" key="14">
    <source>
    </source>
</evidence>
<evidence type="ECO:0000269" key="15">
    <source>
    </source>
</evidence>
<evidence type="ECO:0000269" key="16">
    <source>
    </source>
</evidence>
<evidence type="ECO:0000269" key="17">
    <source>
    </source>
</evidence>
<evidence type="ECO:0000269" key="18">
    <source>
    </source>
</evidence>
<evidence type="ECO:0000269" key="19">
    <source>
    </source>
</evidence>
<evidence type="ECO:0000269" key="20">
    <source>
    </source>
</evidence>
<evidence type="ECO:0000269" key="21">
    <source>
    </source>
</evidence>
<evidence type="ECO:0000269" key="22">
    <source>
    </source>
</evidence>
<evidence type="ECO:0000269" key="23">
    <source>
    </source>
</evidence>
<evidence type="ECO:0000269" key="24">
    <source>
    </source>
</evidence>
<evidence type="ECO:0000269" key="25">
    <source>
    </source>
</evidence>
<evidence type="ECO:0000269" key="26">
    <source>
    </source>
</evidence>
<evidence type="ECO:0000269" key="27">
    <source>
    </source>
</evidence>
<evidence type="ECO:0000269" key="28">
    <source>
    </source>
</evidence>
<evidence type="ECO:0000269" key="29">
    <source>
    </source>
</evidence>
<evidence type="ECO:0000269" key="30">
    <source>
    </source>
</evidence>
<evidence type="ECO:0000269" key="31">
    <source>
    </source>
</evidence>
<evidence type="ECO:0000269" key="32">
    <source>
    </source>
</evidence>
<evidence type="ECO:0000269" key="33">
    <source>
    </source>
</evidence>
<evidence type="ECO:0000269" key="34">
    <source>
    </source>
</evidence>
<evidence type="ECO:0000269" key="35">
    <source>
    </source>
</evidence>
<evidence type="ECO:0000305" key="36"/>
<evidence type="ECO:0000305" key="37">
    <source>
    </source>
</evidence>
<evidence type="ECO:0000312" key="38">
    <source>
        <dbReference type="HGNC" id="HGNC:2389"/>
    </source>
</evidence>
<evidence type="ECO:0007744" key="39">
    <source>
        <dbReference type="PDB" id="5VVV"/>
    </source>
</evidence>
<evidence type="ECO:0007744" key="40">
    <source>
    </source>
</evidence>
<evidence type="ECO:0007829" key="41">
    <source>
        <dbReference type="PDB" id="2KLR"/>
    </source>
</evidence>
<evidence type="ECO:0007829" key="42">
    <source>
        <dbReference type="PDB" id="2N0K"/>
    </source>
</evidence>
<evidence type="ECO:0007829" key="43">
    <source>
        <dbReference type="PDB" id="4M5S"/>
    </source>
</evidence>
<evidence type="ECO:0007829" key="44">
    <source>
        <dbReference type="PDB" id="4M5T"/>
    </source>
</evidence>
<sequence length="175" mass="20159">MDIAIHHPWIRRPFFPFHSPSRLFDQFFGEHLLESDLFPTSTSLSPFYLRPPSFLRAPSWFDTGLSEMRLEKDRFSVNLDVKHFSPEELKVKVLGDVIEVHGKHEERQDEHGFISREFHRKYRIPADVDPLTITSSLSSDGVLTVNGPRKQVSGPERTIPITREEKPAVTAAPKK</sequence>
<dbReference type="EMBL" id="M28638">
    <property type="protein sequence ID" value="AAA52104.1"/>
    <property type="molecule type" value="Genomic_DNA"/>
</dbReference>
<dbReference type="EMBL" id="S45630">
    <property type="protein sequence ID" value="AAB23453.1"/>
    <property type="molecule type" value="mRNA"/>
</dbReference>
<dbReference type="EMBL" id="AF007162">
    <property type="protein sequence ID" value="AAC19161.1"/>
    <property type="molecule type" value="mRNA"/>
</dbReference>
<dbReference type="EMBL" id="AK314029">
    <property type="protein sequence ID" value="BAG36739.1"/>
    <property type="molecule type" value="mRNA"/>
</dbReference>
<dbReference type="EMBL" id="BT006770">
    <property type="protein sequence ID" value="AAP35416.1"/>
    <property type="molecule type" value="mRNA"/>
</dbReference>
<dbReference type="EMBL" id="EF444955">
    <property type="protein sequence ID" value="ACA05949.1"/>
    <property type="molecule type" value="Genomic_DNA"/>
</dbReference>
<dbReference type="EMBL" id="CH471065">
    <property type="protein sequence ID" value="EAW67162.1"/>
    <property type="molecule type" value="Genomic_DNA"/>
</dbReference>
<dbReference type="EMBL" id="BC007008">
    <property type="protein sequence ID" value="AAH07008.1"/>
    <property type="molecule type" value="mRNA"/>
</dbReference>
<dbReference type="EMBL" id="M24906">
    <property type="protein sequence ID" value="AAA60267.1"/>
    <property type="molecule type" value="mRNA"/>
</dbReference>
<dbReference type="CCDS" id="CCDS8351.1"/>
<dbReference type="PIR" id="A35332">
    <property type="entry name" value="CYHUAB"/>
</dbReference>
<dbReference type="RefSeq" id="NP_001276736.1">
    <property type="nucleotide sequence ID" value="NM_001289807.1"/>
</dbReference>
<dbReference type="RefSeq" id="NP_001276737.1">
    <property type="nucleotide sequence ID" value="NM_001289808.2"/>
</dbReference>
<dbReference type="RefSeq" id="NP_001355174.1">
    <property type="nucleotide sequence ID" value="NM_001368245.1"/>
</dbReference>
<dbReference type="RefSeq" id="NP_001876.1">
    <property type="nucleotide sequence ID" value="NM_001885.3"/>
</dbReference>
<dbReference type="RefSeq" id="XP_011540910.1">
    <property type="nucleotide sequence ID" value="XM_011542608.1"/>
</dbReference>
<dbReference type="RefSeq" id="XP_054223672.1">
    <property type="nucleotide sequence ID" value="XM_054367697.1"/>
</dbReference>
<dbReference type="PDB" id="2KLR">
    <property type="method" value="NMR"/>
    <property type="chains" value="A/B=1-175"/>
</dbReference>
<dbReference type="PDB" id="2N0K">
    <property type="method" value="NMR"/>
    <property type="chains" value="A/B=64-152"/>
</dbReference>
<dbReference type="PDB" id="2WJ7">
    <property type="method" value="X-ray"/>
    <property type="resolution" value="2.63 A"/>
    <property type="chains" value="A/B/C/D/E=67-157"/>
</dbReference>
<dbReference type="PDB" id="2Y1Y">
    <property type="method" value="X-ray"/>
    <property type="resolution" value="2.00 A"/>
    <property type="chains" value="A=71-157"/>
</dbReference>
<dbReference type="PDB" id="2Y1Z">
    <property type="method" value="X-ray"/>
    <property type="resolution" value="2.50 A"/>
    <property type="chains" value="A/B=67-157"/>
</dbReference>
<dbReference type="PDB" id="2Y22">
    <property type="method" value="X-ray"/>
    <property type="resolution" value="3.70 A"/>
    <property type="chains" value="A/B/C/D/E/F=67-157"/>
</dbReference>
<dbReference type="PDB" id="2YGD">
    <property type="method" value="EM"/>
    <property type="resolution" value="9.40 A"/>
    <property type="chains" value="A/B/C/D/E/F/G/H/I/J/K/L/M/N/O/P/Q/R/S/T/U/V/W/X=1-175"/>
</dbReference>
<dbReference type="PDB" id="3J07">
    <property type="method" value="Other"/>
    <property type="chains" value="A/B/C/D/E/F/G/H/I/J/K/L/M/N/O/P/Q/R/S/T/U/V/W/X=1-175"/>
</dbReference>
<dbReference type="PDB" id="3L1G">
    <property type="method" value="X-ray"/>
    <property type="resolution" value="3.32 A"/>
    <property type="chains" value="A=68-162"/>
</dbReference>
<dbReference type="PDB" id="3SGM">
    <property type="method" value="X-ray"/>
    <property type="resolution" value="1.70 A"/>
    <property type="chains" value="A/B/C/D=90-100"/>
</dbReference>
<dbReference type="PDB" id="3SGN">
    <property type="method" value="X-ray"/>
    <property type="resolution" value="2.81 A"/>
    <property type="chains" value="A/B=90-100"/>
</dbReference>
<dbReference type="PDB" id="3SGO">
    <property type="method" value="X-ray"/>
    <property type="resolution" value="2.56 A"/>
    <property type="chains" value="A=90-100"/>
</dbReference>
<dbReference type="PDB" id="3SGP">
    <property type="method" value="X-ray"/>
    <property type="resolution" value="1.40 A"/>
    <property type="chains" value="A/B/C/D=90-100"/>
</dbReference>
<dbReference type="PDB" id="3SGR">
    <property type="method" value="X-ray"/>
    <property type="resolution" value="2.17 A"/>
    <property type="chains" value="A/B/C/D/E/F=90-100"/>
</dbReference>
<dbReference type="PDB" id="3SGS">
    <property type="method" value="X-ray"/>
    <property type="resolution" value="1.70 A"/>
    <property type="chains" value="A=95-100"/>
</dbReference>
<dbReference type="PDB" id="4M5S">
    <property type="method" value="X-ray"/>
    <property type="resolution" value="1.37 A"/>
    <property type="chains" value="A=68-153, B=156-164"/>
</dbReference>
<dbReference type="PDB" id="4M5T">
    <property type="method" value="X-ray"/>
    <property type="resolution" value="2.00 A"/>
    <property type="chains" value="A/C/E/G=68-153, B/D/F/H=156-164"/>
</dbReference>
<dbReference type="PDB" id="5VVV">
    <property type="method" value="X-ray"/>
    <property type="resolution" value="2.80 A"/>
    <property type="chains" value="B/D=38-50"/>
</dbReference>
<dbReference type="PDB" id="6BP9">
    <property type="method" value="NMR"/>
    <property type="chains" value="A/B=64-152"/>
</dbReference>
<dbReference type="PDB" id="7ROJ">
    <property type="method" value="X-ray"/>
    <property type="resolution" value="1.60 A"/>
    <property type="chains" value="A/B/C/D/E/F/G/H/I/J/K/L=90-100"/>
</dbReference>
<dbReference type="PDB" id="9BEE">
    <property type="method" value="EM"/>
    <property type="resolution" value="3.40 A"/>
    <property type="chains" value="B=76-163"/>
</dbReference>
<dbReference type="PDBsum" id="2KLR"/>
<dbReference type="PDBsum" id="2N0K"/>
<dbReference type="PDBsum" id="2WJ7"/>
<dbReference type="PDBsum" id="2Y1Y"/>
<dbReference type="PDBsum" id="2Y1Z"/>
<dbReference type="PDBsum" id="2Y22"/>
<dbReference type="PDBsum" id="2YGD"/>
<dbReference type="PDBsum" id="3J07"/>
<dbReference type="PDBsum" id="3L1G"/>
<dbReference type="PDBsum" id="3SGM"/>
<dbReference type="PDBsum" id="3SGN"/>
<dbReference type="PDBsum" id="3SGO"/>
<dbReference type="PDBsum" id="3SGP"/>
<dbReference type="PDBsum" id="3SGR"/>
<dbReference type="PDBsum" id="3SGS"/>
<dbReference type="PDBsum" id="4M5S"/>
<dbReference type="PDBsum" id="4M5T"/>
<dbReference type="PDBsum" id="5VVV"/>
<dbReference type="PDBsum" id="6BP9"/>
<dbReference type="PDBsum" id="7ROJ"/>
<dbReference type="PDBsum" id="9BEE"/>
<dbReference type="BMRB" id="P02511"/>
<dbReference type="EMDB" id="EMD-2366"/>
<dbReference type="EMDB" id="EMD-44477"/>
<dbReference type="SMR" id="P02511"/>
<dbReference type="BioGRID" id="107800">
    <property type="interactions" value="222"/>
</dbReference>
<dbReference type="CORUM" id="P02511"/>
<dbReference type="DIP" id="DIP-35017N"/>
<dbReference type="FunCoup" id="P02511">
    <property type="interactions" value="655"/>
</dbReference>
<dbReference type="IntAct" id="P02511">
    <property type="interactions" value="100"/>
</dbReference>
<dbReference type="MINT" id="P02511"/>
<dbReference type="STRING" id="9606.ENSP00000433560"/>
<dbReference type="BindingDB" id="P02511"/>
<dbReference type="ChEMBL" id="CHEMBL3621022"/>
<dbReference type="MoonDB" id="P02511">
    <property type="type" value="Curated"/>
</dbReference>
<dbReference type="TCDB" id="8.A.172.1.1">
    <property type="family name" value="the Alpha-crystallin chaperone (crya) family"/>
</dbReference>
<dbReference type="GlyConnect" id="33">
    <property type="glycosylation" value="1 O-GlcNAc glycan"/>
</dbReference>
<dbReference type="GlyCosmos" id="P02511">
    <property type="glycosylation" value="2 sites, 1 glycan"/>
</dbReference>
<dbReference type="GlyGen" id="P02511">
    <property type="glycosylation" value="7 sites, 1 O-linked glycan (3 sites)"/>
</dbReference>
<dbReference type="iPTMnet" id="P02511"/>
<dbReference type="MetOSite" id="P02511"/>
<dbReference type="PhosphoSitePlus" id="P02511"/>
<dbReference type="BioMuta" id="CRYAB"/>
<dbReference type="DMDM" id="117385"/>
<dbReference type="REPRODUCTION-2DPAGE" id="IPI00021369"/>
<dbReference type="jPOST" id="P02511"/>
<dbReference type="MassIVE" id="P02511"/>
<dbReference type="PaxDb" id="9606-ENSP00000433560"/>
<dbReference type="PeptideAtlas" id="P02511"/>
<dbReference type="PRIDE" id="P02511"/>
<dbReference type="ProteomicsDB" id="51527"/>
<dbReference type="Pumba" id="P02511"/>
<dbReference type="Antibodypedia" id="3674">
    <property type="antibodies" value="1723 antibodies from 48 providers"/>
</dbReference>
<dbReference type="CPTC" id="P02511">
    <property type="antibodies" value="3 antibodies"/>
</dbReference>
<dbReference type="DNASU" id="1410"/>
<dbReference type="Ensembl" id="ENST00000227251.7">
    <property type="protein sequence ID" value="ENSP00000227251.3"/>
    <property type="gene ID" value="ENSG00000109846.9"/>
</dbReference>
<dbReference type="Ensembl" id="ENST00000526180.6">
    <property type="protein sequence ID" value="ENSP00000436051.1"/>
    <property type="gene ID" value="ENSG00000109846.9"/>
</dbReference>
<dbReference type="Ensembl" id="ENST00000527899.6">
    <property type="protein sequence ID" value="ENSP00000436089.2"/>
    <property type="gene ID" value="ENSG00000109846.9"/>
</dbReference>
<dbReference type="Ensembl" id="ENST00000527950.5">
    <property type="protein sequence ID" value="ENSP00000437149.1"/>
    <property type="gene ID" value="ENSG00000109846.9"/>
</dbReference>
<dbReference type="Ensembl" id="ENST00000531198.5">
    <property type="protein sequence ID" value="ENSP00000434247.1"/>
    <property type="gene ID" value="ENSG00000109846.9"/>
</dbReference>
<dbReference type="Ensembl" id="ENST00000533475.6">
    <property type="protein sequence ID" value="ENSP00000433560.1"/>
    <property type="gene ID" value="ENSG00000109846.9"/>
</dbReference>
<dbReference type="Ensembl" id="ENST00000533879.2">
    <property type="protein sequence ID" value="ENSP00000435931.2"/>
    <property type="gene ID" value="ENSG00000109846.9"/>
</dbReference>
<dbReference type="Ensembl" id="ENST00000616970.5">
    <property type="protein sequence ID" value="ENSP00000483554.1"/>
    <property type="gene ID" value="ENSG00000109846.9"/>
</dbReference>
<dbReference type="Ensembl" id="ENST00000650687.2">
    <property type="protein sequence ID" value="ENSP00000499082.1"/>
    <property type="gene ID" value="ENSG00000109846.9"/>
</dbReference>
<dbReference type="Ensembl" id="ENST00000651164.1">
    <property type="protein sequence ID" value="ENSP00000498735.1"/>
    <property type="gene ID" value="ENSG00000109846.9"/>
</dbReference>
<dbReference type="GeneID" id="1410"/>
<dbReference type="KEGG" id="hsa:1410"/>
<dbReference type="MANE-Select" id="ENST00000650687.2">
    <property type="protein sequence ID" value="ENSP00000499082.1"/>
    <property type="RefSeq nucleotide sequence ID" value="NM_001289808.2"/>
    <property type="RefSeq protein sequence ID" value="NP_001276737.1"/>
</dbReference>
<dbReference type="AGR" id="HGNC:2389"/>
<dbReference type="CTD" id="1410"/>
<dbReference type="DisGeNET" id="1410"/>
<dbReference type="GeneCards" id="CRYAB"/>
<dbReference type="HGNC" id="HGNC:2389">
    <property type="gene designation" value="CRYAB"/>
</dbReference>
<dbReference type="HPA" id="ENSG00000109846">
    <property type="expression patterns" value="Tissue enhanced (heart muscle, skeletal muscle, tongue)"/>
</dbReference>
<dbReference type="MalaCards" id="CRYAB"/>
<dbReference type="MIM" id="123590">
    <property type="type" value="gene"/>
</dbReference>
<dbReference type="MIM" id="608810">
    <property type="type" value="phenotype"/>
</dbReference>
<dbReference type="MIM" id="613763">
    <property type="type" value="phenotype"/>
</dbReference>
<dbReference type="MIM" id="613869">
    <property type="type" value="phenotype"/>
</dbReference>
<dbReference type="MIM" id="615184">
    <property type="type" value="phenotype"/>
</dbReference>
<dbReference type="neXtProt" id="NX_P02511"/>
<dbReference type="OpenTargets" id="ENSG00000109846"/>
<dbReference type="Orphanet" id="399058">
    <property type="disease" value="Alpha-B crystallin-related late-onset myopathy"/>
</dbReference>
<dbReference type="Orphanet" id="441452">
    <property type="disease" value="Early-onset lamellar cataract"/>
</dbReference>
<dbReference type="Orphanet" id="98991">
    <property type="disease" value="Early-onset nuclear cataract"/>
</dbReference>
<dbReference type="Orphanet" id="98993">
    <property type="disease" value="Early-onset posterior polar cataract"/>
</dbReference>
<dbReference type="Orphanet" id="154">
    <property type="disease" value="Familial isolated dilated cardiomyopathy"/>
</dbReference>
<dbReference type="Orphanet" id="280553">
    <property type="disease" value="Fatal infantile hypertonic myofibrillar myopathy"/>
</dbReference>
<dbReference type="PharmGKB" id="PA26907"/>
<dbReference type="VEuPathDB" id="HostDB:ENSG00000109846"/>
<dbReference type="eggNOG" id="KOG3591">
    <property type="taxonomic scope" value="Eukaryota"/>
</dbReference>
<dbReference type="GeneTree" id="ENSGT00940000157434"/>
<dbReference type="InParanoid" id="P02511"/>
<dbReference type="OMA" id="FRDWWED"/>
<dbReference type="OrthoDB" id="1431247at2759"/>
<dbReference type="PAN-GO" id="P02511">
    <property type="GO annotations" value="6 GO annotations based on evolutionary models"/>
</dbReference>
<dbReference type="PhylomeDB" id="P02511"/>
<dbReference type="TreeFam" id="TF105049"/>
<dbReference type="PathwayCommons" id="P02511"/>
<dbReference type="Reactome" id="R-HSA-3371571">
    <property type="pathway name" value="HSF1-dependent transactivation"/>
</dbReference>
<dbReference type="SignaLink" id="P02511"/>
<dbReference type="SIGNOR" id="P02511"/>
<dbReference type="BioGRID-ORCS" id="1410">
    <property type="hits" value="23 hits in 1155 CRISPR screens"/>
</dbReference>
<dbReference type="CD-CODE" id="8C2F96ED">
    <property type="entry name" value="Centrosome"/>
</dbReference>
<dbReference type="CD-CODE" id="FB4E32DD">
    <property type="entry name" value="Presynaptic clusters and postsynaptic densities"/>
</dbReference>
<dbReference type="ChiTaRS" id="CRYAB">
    <property type="organism name" value="human"/>
</dbReference>
<dbReference type="EvolutionaryTrace" id="P02511"/>
<dbReference type="GeneWiki" id="CRYAB"/>
<dbReference type="GenomeRNAi" id="1410"/>
<dbReference type="Pharos" id="P02511">
    <property type="development level" value="Tchem"/>
</dbReference>
<dbReference type="PRO" id="PR:P02511"/>
<dbReference type="Proteomes" id="UP000005640">
    <property type="component" value="Chromosome 11"/>
</dbReference>
<dbReference type="RNAct" id="P02511">
    <property type="molecule type" value="protein"/>
</dbReference>
<dbReference type="Bgee" id="ENSG00000109846">
    <property type="expression patterns" value="Expressed in left ventricle myocardium and 205 other cell types or tissues"/>
</dbReference>
<dbReference type="ExpressionAtlas" id="P02511">
    <property type="expression patterns" value="baseline and differential"/>
</dbReference>
<dbReference type="GO" id="GO:0032432">
    <property type="term" value="C:actin filament bundle"/>
    <property type="evidence" value="ECO:0007669"/>
    <property type="project" value="Ensembl"/>
</dbReference>
<dbReference type="GO" id="GO:0030424">
    <property type="term" value="C:axon"/>
    <property type="evidence" value="ECO:0007669"/>
    <property type="project" value="Ensembl"/>
</dbReference>
<dbReference type="GO" id="GO:0097512">
    <property type="term" value="C:cardiac myofibril"/>
    <property type="evidence" value="ECO:0007669"/>
    <property type="project" value="Ensembl"/>
</dbReference>
<dbReference type="GO" id="GO:0009986">
    <property type="term" value="C:cell surface"/>
    <property type="evidence" value="ECO:0007669"/>
    <property type="project" value="Ensembl"/>
</dbReference>
<dbReference type="GO" id="GO:0005737">
    <property type="term" value="C:cytoplasm"/>
    <property type="evidence" value="ECO:0000314"/>
    <property type="project" value="UniProtKB"/>
</dbReference>
<dbReference type="GO" id="GO:0005829">
    <property type="term" value="C:cytosol"/>
    <property type="evidence" value="ECO:0007669"/>
    <property type="project" value="Ensembl"/>
</dbReference>
<dbReference type="GO" id="GO:0043197">
    <property type="term" value="C:dendritic spine"/>
    <property type="evidence" value="ECO:0007669"/>
    <property type="project" value="Ensembl"/>
</dbReference>
<dbReference type="GO" id="GO:0070062">
    <property type="term" value="C:extracellular exosome"/>
    <property type="evidence" value="ECO:0007005"/>
    <property type="project" value="UniProtKB"/>
</dbReference>
<dbReference type="GO" id="GO:0005764">
    <property type="term" value="C:lysosome"/>
    <property type="evidence" value="ECO:0007669"/>
    <property type="project" value="UniProtKB-SubCell"/>
</dbReference>
<dbReference type="GO" id="GO:0031430">
    <property type="term" value="C:M band"/>
    <property type="evidence" value="ECO:0007669"/>
    <property type="project" value="Ensembl"/>
</dbReference>
<dbReference type="GO" id="GO:0005739">
    <property type="term" value="C:mitochondrion"/>
    <property type="evidence" value="ECO:0007669"/>
    <property type="project" value="Ensembl"/>
</dbReference>
<dbReference type="GO" id="GO:0005654">
    <property type="term" value="C:nucleoplasm"/>
    <property type="evidence" value="ECO:0000304"/>
    <property type="project" value="Reactome"/>
</dbReference>
<dbReference type="GO" id="GO:0005634">
    <property type="term" value="C:nucleus"/>
    <property type="evidence" value="ECO:0000314"/>
    <property type="project" value="UniProtKB"/>
</dbReference>
<dbReference type="GO" id="GO:0043204">
    <property type="term" value="C:perikaryon"/>
    <property type="evidence" value="ECO:0007669"/>
    <property type="project" value="Ensembl"/>
</dbReference>
<dbReference type="GO" id="GO:0032991">
    <property type="term" value="C:protein-containing complex"/>
    <property type="evidence" value="ECO:0000314"/>
    <property type="project" value="UniProtKB"/>
</dbReference>
<dbReference type="GO" id="GO:0097060">
    <property type="term" value="C:synaptic membrane"/>
    <property type="evidence" value="ECO:0007669"/>
    <property type="project" value="Ensembl"/>
</dbReference>
<dbReference type="GO" id="GO:0030018">
    <property type="term" value="C:Z disc"/>
    <property type="evidence" value="ECO:0007669"/>
    <property type="project" value="Ensembl"/>
</dbReference>
<dbReference type="GO" id="GO:0001540">
    <property type="term" value="F:amyloid-beta binding"/>
    <property type="evidence" value="ECO:0000353"/>
    <property type="project" value="ARUK-UCL"/>
</dbReference>
<dbReference type="GO" id="GO:0042802">
    <property type="term" value="F:identical protein binding"/>
    <property type="evidence" value="ECO:0000353"/>
    <property type="project" value="UniProtKB"/>
</dbReference>
<dbReference type="GO" id="GO:0046872">
    <property type="term" value="F:metal ion binding"/>
    <property type="evidence" value="ECO:0007669"/>
    <property type="project" value="UniProtKB-KW"/>
</dbReference>
<dbReference type="GO" id="GO:0008017">
    <property type="term" value="F:microtubule binding"/>
    <property type="evidence" value="ECO:0007669"/>
    <property type="project" value="Ensembl"/>
</dbReference>
<dbReference type="GO" id="GO:0042803">
    <property type="term" value="F:protein homodimerization activity"/>
    <property type="evidence" value="ECO:0000353"/>
    <property type="project" value="UniProtKB"/>
</dbReference>
<dbReference type="GO" id="GO:0044877">
    <property type="term" value="F:protein-containing complex binding"/>
    <property type="evidence" value="ECO:0000353"/>
    <property type="project" value="ARUK-UCL"/>
</dbReference>
<dbReference type="GO" id="GO:0005212">
    <property type="term" value="F:structural constituent of eye lens"/>
    <property type="evidence" value="ECO:0007669"/>
    <property type="project" value="UniProtKB-KW"/>
</dbReference>
<dbReference type="GO" id="GO:0005198">
    <property type="term" value="F:structural molecule activity"/>
    <property type="evidence" value="ECO:0000314"/>
    <property type="project" value="UniProtKB"/>
</dbReference>
<dbReference type="GO" id="GO:0051082">
    <property type="term" value="F:unfolded protein binding"/>
    <property type="evidence" value="ECO:0000353"/>
    <property type="project" value="UniProtKB"/>
</dbReference>
<dbReference type="GO" id="GO:0060561">
    <property type="term" value="P:apoptotic process involved in morphogenesis"/>
    <property type="evidence" value="ECO:0007669"/>
    <property type="project" value="Ensembl"/>
</dbReference>
<dbReference type="GO" id="GO:0071480">
    <property type="term" value="P:cellular response to gamma radiation"/>
    <property type="evidence" value="ECO:0000315"/>
    <property type="project" value="MGI"/>
</dbReference>
<dbReference type="GO" id="GO:0002088">
    <property type="term" value="P:lens development in camera-type eye"/>
    <property type="evidence" value="ECO:0007669"/>
    <property type="project" value="Ensembl"/>
</dbReference>
<dbReference type="GO" id="GO:0031109">
    <property type="term" value="P:microtubule polymerization or depolymerization"/>
    <property type="evidence" value="ECO:0007669"/>
    <property type="project" value="Ensembl"/>
</dbReference>
<dbReference type="GO" id="GO:0006936">
    <property type="term" value="P:muscle contraction"/>
    <property type="evidence" value="ECO:0000304"/>
    <property type="project" value="ProtInc"/>
</dbReference>
<dbReference type="GO" id="GO:0007517">
    <property type="term" value="P:muscle organ development"/>
    <property type="evidence" value="ECO:0007669"/>
    <property type="project" value="Ensembl"/>
</dbReference>
<dbReference type="GO" id="GO:1905907">
    <property type="term" value="P:negative regulation of amyloid fibril formation"/>
    <property type="evidence" value="ECO:0000314"/>
    <property type="project" value="ARUK-UCL"/>
</dbReference>
<dbReference type="GO" id="GO:0043066">
    <property type="term" value="P:negative regulation of apoptotic process"/>
    <property type="evidence" value="ECO:0000314"/>
    <property type="project" value="HGNC-UCL"/>
</dbReference>
<dbReference type="GO" id="GO:0030308">
    <property type="term" value="P:negative regulation of cell growth"/>
    <property type="evidence" value="ECO:0007669"/>
    <property type="project" value="Ensembl"/>
</dbReference>
<dbReference type="GO" id="GO:0045892">
    <property type="term" value="P:negative regulation of DNA-templated transcription"/>
    <property type="evidence" value="ECO:0000314"/>
    <property type="project" value="UniProtKB"/>
</dbReference>
<dbReference type="GO" id="GO:0010629">
    <property type="term" value="P:negative regulation of gene expression"/>
    <property type="evidence" value="ECO:0007669"/>
    <property type="project" value="Ensembl"/>
</dbReference>
<dbReference type="GO" id="GO:0032387">
    <property type="term" value="P:negative regulation of intracellular transport"/>
    <property type="evidence" value="ECO:0000314"/>
    <property type="project" value="HGNC-UCL"/>
</dbReference>
<dbReference type="GO" id="GO:0031333">
    <property type="term" value="P:negative regulation of protein-containing complex assembly"/>
    <property type="evidence" value="ECO:0000314"/>
    <property type="project" value="ARUK-UCL"/>
</dbReference>
<dbReference type="GO" id="GO:2000378">
    <property type="term" value="P:negative regulation of reactive oxygen species metabolic process"/>
    <property type="evidence" value="ECO:0007669"/>
    <property type="project" value="Ensembl"/>
</dbReference>
<dbReference type="GO" id="GO:0006457">
    <property type="term" value="P:protein folding"/>
    <property type="evidence" value="ECO:0000303"/>
    <property type="project" value="ProtInc"/>
</dbReference>
<dbReference type="GO" id="GO:0042026">
    <property type="term" value="P:protein refolding"/>
    <property type="evidence" value="ECO:0000318"/>
    <property type="project" value="GO_Central"/>
</dbReference>
<dbReference type="GO" id="GO:0050821">
    <property type="term" value="P:protein stabilization"/>
    <property type="evidence" value="ECO:0000315"/>
    <property type="project" value="CAFA"/>
</dbReference>
<dbReference type="GO" id="GO:0043067">
    <property type="term" value="P:regulation of programmed cell death"/>
    <property type="evidence" value="ECO:0000315"/>
    <property type="project" value="MGI"/>
</dbReference>
<dbReference type="GO" id="GO:0032355">
    <property type="term" value="P:response to estradiol"/>
    <property type="evidence" value="ECO:0007669"/>
    <property type="project" value="Ensembl"/>
</dbReference>
<dbReference type="GO" id="GO:0009408">
    <property type="term" value="P:response to heat"/>
    <property type="evidence" value="ECO:0000318"/>
    <property type="project" value="GO_Central"/>
</dbReference>
<dbReference type="GO" id="GO:0042542">
    <property type="term" value="P:response to hydrogen peroxide"/>
    <property type="evidence" value="ECO:0007669"/>
    <property type="project" value="Ensembl"/>
</dbReference>
<dbReference type="GO" id="GO:0001666">
    <property type="term" value="P:response to hypoxia"/>
    <property type="evidence" value="ECO:0007669"/>
    <property type="project" value="Ensembl"/>
</dbReference>
<dbReference type="GO" id="GO:0051403">
    <property type="term" value="P:stress-activated MAPK cascade"/>
    <property type="evidence" value="ECO:0007669"/>
    <property type="project" value="Ensembl"/>
</dbReference>
<dbReference type="GO" id="GO:0007021">
    <property type="term" value="P:tubulin complex assembly"/>
    <property type="evidence" value="ECO:0007669"/>
    <property type="project" value="Ensembl"/>
</dbReference>
<dbReference type="CDD" id="cd06498">
    <property type="entry name" value="ACD_alphaB-crystallin_HspB5"/>
    <property type="match status" value="1"/>
</dbReference>
<dbReference type="DisProt" id="DP00445"/>
<dbReference type="FunFam" id="2.60.40.790:FF:000011">
    <property type="entry name" value="Alpha-crystallin B chain"/>
    <property type="match status" value="1"/>
</dbReference>
<dbReference type="Gene3D" id="2.60.40.790">
    <property type="match status" value="1"/>
</dbReference>
<dbReference type="InterPro" id="IPR002068">
    <property type="entry name" value="A-crystallin/Hsp20_dom"/>
</dbReference>
<dbReference type="InterPro" id="IPR037882">
    <property type="entry name" value="ACD_alphaB-crystallin"/>
</dbReference>
<dbReference type="InterPro" id="IPR055269">
    <property type="entry name" value="Alpha-crystallin/HSP_16"/>
</dbReference>
<dbReference type="InterPro" id="IPR001436">
    <property type="entry name" value="Alpha-crystallin/sHSP_animal"/>
</dbReference>
<dbReference type="InterPro" id="IPR003090">
    <property type="entry name" value="Alpha-crystallin_N"/>
</dbReference>
<dbReference type="InterPro" id="IPR008978">
    <property type="entry name" value="HSP20-like_chaperone"/>
</dbReference>
<dbReference type="PANTHER" id="PTHR45640:SF5">
    <property type="entry name" value="ALPHA-CRYSTALLIN B CHAIN"/>
    <property type="match status" value="1"/>
</dbReference>
<dbReference type="PANTHER" id="PTHR45640">
    <property type="entry name" value="HEAT SHOCK PROTEIN HSP-12.2-RELATED"/>
    <property type="match status" value="1"/>
</dbReference>
<dbReference type="Pfam" id="PF00525">
    <property type="entry name" value="Crystallin"/>
    <property type="match status" value="1"/>
</dbReference>
<dbReference type="Pfam" id="PF00011">
    <property type="entry name" value="HSP20"/>
    <property type="match status" value="1"/>
</dbReference>
<dbReference type="PIRSF" id="PIRSF036514">
    <property type="entry name" value="Sm_HSP_B1"/>
    <property type="match status" value="1"/>
</dbReference>
<dbReference type="PRINTS" id="PR00299">
    <property type="entry name" value="ACRYSTALLIN"/>
</dbReference>
<dbReference type="SUPFAM" id="SSF49764">
    <property type="entry name" value="HSP20-like chaperones"/>
    <property type="match status" value="1"/>
</dbReference>
<dbReference type="PROSITE" id="PS01031">
    <property type="entry name" value="SHSP"/>
    <property type="match status" value="1"/>
</dbReference>